<accession>P63722</accession>
<accession>A0A1R3XZM3</accession>
<accession>O08464</accession>
<accession>X2BJA3</accession>
<feature type="chain" id="PRO_0000052301" description="Putative cytochrome P450 140">
    <location>
        <begin position="1"/>
        <end position="438"/>
    </location>
</feature>
<feature type="binding site" description="axial binding residue" evidence="1">
    <location>
        <position position="381"/>
    </location>
    <ligand>
        <name>heme</name>
        <dbReference type="ChEBI" id="CHEBI:30413"/>
    </ligand>
    <ligandPart>
        <name>Fe</name>
        <dbReference type="ChEBI" id="CHEBI:18248"/>
    </ligandPart>
</feature>
<protein>
    <recommendedName>
        <fullName>Putative cytochrome P450 140</fullName>
        <ecNumber>1.14.-.-</ecNumber>
    </recommendedName>
</protein>
<dbReference type="EC" id="1.14.-.-"/>
<dbReference type="EMBL" id="LT708304">
    <property type="protein sequence ID" value="SIU00516.1"/>
    <property type="molecule type" value="Genomic_DNA"/>
</dbReference>
<dbReference type="RefSeq" id="NP_855564.1">
    <property type="nucleotide sequence ID" value="NC_002945.3"/>
</dbReference>
<dbReference type="RefSeq" id="WP_003409406.1">
    <property type="nucleotide sequence ID" value="NC_002945.4"/>
</dbReference>
<dbReference type="SMR" id="P63722"/>
<dbReference type="KEGG" id="mbo:BQ2027_MB1912C"/>
<dbReference type="PATRIC" id="fig|233413.5.peg.2095"/>
<dbReference type="Proteomes" id="UP000001419">
    <property type="component" value="Chromosome"/>
</dbReference>
<dbReference type="GO" id="GO:0036199">
    <property type="term" value="F:cholest-4-en-3-one 26-monooxygenase activity"/>
    <property type="evidence" value="ECO:0007669"/>
    <property type="project" value="TreeGrafter"/>
</dbReference>
<dbReference type="GO" id="GO:0020037">
    <property type="term" value="F:heme binding"/>
    <property type="evidence" value="ECO:0007669"/>
    <property type="project" value="InterPro"/>
</dbReference>
<dbReference type="GO" id="GO:0005506">
    <property type="term" value="F:iron ion binding"/>
    <property type="evidence" value="ECO:0007669"/>
    <property type="project" value="InterPro"/>
</dbReference>
<dbReference type="GO" id="GO:0008395">
    <property type="term" value="F:steroid hydroxylase activity"/>
    <property type="evidence" value="ECO:0007669"/>
    <property type="project" value="TreeGrafter"/>
</dbReference>
<dbReference type="GO" id="GO:0006707">
    <property type="term" value="P:cholesterol catabolic process"/>
    <property type="evidence" value="ECO:0007669"/>
    <property type="project" value="TreeGrafter"/>
</dbReference>
<dbReference type="CDD" id="cd20625">
    <property type="entry name" value="CYP164-like"/>
    <property type="match status" value="1"/>
</dbReference>
<dbReference type="FunFam" id="1.10.630.10:FF:000018">
    <property type="entry name" value="Cytochrome P450 monooxygenase"/>
    <property type="match status" value="1"/>
</dbReference>
<dbReference type="Gene3D" id="1.10.630.10">
    <property type="entry name" value="Cytochrome P450"/>
    <property type="match status" value="1"/>
</dbReference>
<dbReference type="InterPro" id="IPR001128">
    <property type="entry name" value="Cyt_P450"/>
</dbReference>
<dbReference type="InterPro" id="IPR002397">
    <property type="entry name" value="Cyt_P450_B"/>
</dbReference>
<dbReference type="InterPro" id="IPR017972">
    <property type="entry name" value="Cyt_P450_CS"/>
</dbReference>
<dbReference type="InterPro" id="IPR036396">
    <property type="entry name" value="Cyt_P450_sf"/>
</dbReference>
<dbReference type="PANTHER" id="PTHR46696:SF4">
    <property type="entry name" value="BIOTIN BIOSYNTHESIS CYTOCHROME P450"/>
    <property type="match status" value="1"/>
</dbReference>
<dbReference type="PANTHER" id="PTHR46696">
    <property type="entry name" value="P450, PUTATIVE (EUROFUNG)-RELATED"/>
    <property type="match status" value="1"/>
</dbReference>
<dbReference type="Pfam" id="PF00067">
    <property type="entry name" value="p450"/>
    <property type="match status" value="1"/>
</dbReference>
<dbReference type="PRINTS" id="PR00359">
    <property type="entry name" value="BP450"/>
</dbReference>
<dbReference type="SUPFAM" id="SSF48264">
    <property type="entry name" value="Cytochrome P450"/>
    <property type="match status" value="1"/>
</dbReference>
<dbReference type="PROSITE" id="PS00086">
    <property type="entry name" value="CYTOCHROME_P450"/>
    <property type="match status" value="1"/>
</dbReference>
<keyword id="KW-0349">Heme</keyword>
<keyword id="KW-0408">Iron</keyword>
<keyword id="KW-0479">Metal-binding</keyword>
<keyword id="KW-0503">Monooxygenase</keyword>
<keyword id="KW-0560">Oxidoreductase</keyword>
<keyword id="KW-1185">Reference proteome</keyword>
<sequence>MKDKLHWLAMHGVIRGIAAIGIRRGDLQARLIADPAVATDPVPFYDEVRSHGALVRNRANYLTVDHRLAHDLLRSDDFRVVSFGENLPPPLRWLERRTRGDQLHPLREPSLLAVEPPDHTRYRKTVSAVFTSRAVSALRDLVEQTAINLLDRFAEQPGIVDVVGRYCSQLPIVVISEILGVPEHDRPRVLEFGELAAPSLDIGIPWRQYLRVQQGIRGFDCWLEGHLQQLRHAPGDDLMSQLIQIAESGDNETQLDETELRAIAGLVLVAGFETTVNLLGNGIRMLLDTPEHLATLRQHPELWPNTVEEILRLDSPVQLTARVACRDVEVAGVRIKRGEVVVIYLAAANRDPAVFPDPHRFDIERPNAGRHLAFSTGRHFCLGAALARAEGEVGLRTFFDRFPDVRAAGAGSRRDTRVLRGWSTLPVTLGPARSMVSP</sequence>
<organism>
    <name type="scientific">Mycobacterium bovis (strain ATCC BAA-935 / AF2122/97)</name>
    <dbReference type="NCBI Taxonomy" id="233413"/>
    <lineage>
        <taxon>Bacteria</taxon>
        <taxon>Bacillati</taxon>
        <taxon>Actinomycetota</taxon>
        <taxon>Actinomycetes</taxon>
        <taxon>Mycobacteriales</taxon>
        <taxon>Mycobacteriaceae</taxon>
        <taxon>Mycobacterium</taxon>
        <taxon>Mycobacterium tuberculosis complex</taxon>
    </lineage>
</organism>
<evidence type="ECO:0000250" key="1"/>
<evidence type="ECO:0000305" key="2"/>
<name>CP140_MYCBO</name>
<gene>
    <name type="primary">cyp140</name>
    <name type="ordered locus">BQ2027_MB1912C</name>
</gene>
<comment type="cofactor">
    <cofactor evidence="1">
        <name>heme</name>
        <dbReference type="ChEBI" id="CHEBI:30413"/>
    </cofactor>
</comment>
<comment type="similarity">
    <text evidence="2">Belongs to the cytochrome P450 family.</text>
</comment>
<proteinExistence type="inferred from homology"/>
<reference key="1">
    <citation type="journal article" date="2003" name="Proc. Natl. Acad. Sci. U.S.A.">
        <title>The complete genome sequence of Mycobacterium bovis.</title>
        <authorList>
            <person name="Garnier T."/>
            <person name="Eiglmeier K."/>
            <person name="Camus J.-C."/>
            <person name="Medina N."/>
            <person name="Mansoor H."/>
            <person name="Pryor M."/>
            <person name="Duthoy S."/>
            <person name="Grondin S."/>
            <person name="Lacroix C."/>
            <person name="Monsempe C."/>
            <person name="Simon S."/>
            <person name="Harris B."/>
            <person name="Atkin R."/>
            <person name="Doggett J."/>
            <person name="Mayes R."/>
            <person name="Keating L."/>
            <person name="Wheeler P.R."/>
            <person name="Parkhill J."/>
            <person name="Barrell B.G."/>
            <person name="Cole S.T."/>
            <person name="Gordon S.V."/>
            <person name="Hewinson R.G."/>
        </authorList>
    </citation>
    <scope>NUCLEOTIDE SEQUENCE [LARGE SCALE GENOMIC DNA]</scope>
    <source>
        <strain>ATCC BAA-935 / AF2122/97</strain>
    </source>
</reference>
<reference key="2">
    <citation type="journal article" date="2017" name="Genome Announc.">
        <title>Updated reference genome sequence and annotation of Mycobacterium bovis AF2122/97.</title>
        <authorList>
            <person name="Malone K.M."/>
            <person name="Farrell D."/>
            <person name="Stuber T.P."/>
            <person name="Schubert O.T."/>
            <person name="Aebersold R."/>
            <person name="Robbe-Austerman S."/>
            <person name="Gordon S.V."/>
        </authorList>
    </citation>
    <scope>NUCLEOTIDE SEQUENCE [LARGE SCALE GENOMIC DNA]</scope>
    <scope>GENOME REANNOTATION</scope>
    <source>
        <strain>ATCC BAA-935 / AF2122/97</strain>
    </source>
</reference>